<keyword id="KW-0067">ATP-binding</keyword>
<keyword id="KW-0143">Chaperone</keyword>
<keyword id="KW-0479">Metal-binding</keyword>
<keyword id="KW-0547">Nucleotide-binding</keyword>
<keyword id="KW-1185">Reference proteome</keyword>
<keyword id="KW-0862">Zinc</keyword>
<comment type="function">
    <text evidence="1">ATP-dependent specificity component of the Clp protease. It directs the protease to specific substrates. Can perform chaperone functions in the absence of ClpP.</text>
</comment>
<comment type="subunit">
    <text evidence="1">Component of the ClpX-ClpP complex. Forms a hexameric ring that, in the presence of ATP, binds to fourteen ClpP subunits assembled into a disk-like structure with a central cavity, resembling the structure of eukaryotic proteasomes.</text>
</comment>
<comment type="similarity">
    <text evidence="1">Belongs to the ClpX chaperone family.</text>
</comment>
<sequence length="421" mass="46685">MFKFNEEKGQLKCSFCGKTQDQVRKLVAGPGVYICDECIELCTEIVEEELGSEEEVEFKDVPKPKEIREILDEYVIGQDQAKKSLAVAVYNHYKRINSNSKVDDVELSKSNISMIGPTGSGKTLLAQTLARILNVPFAIADATSLTEAGYVGEDVENILLKLIQAADYDVEKAEKGIIYIDEIDKVARKSENPSITRDVSGEGVQQALLKILEGTVASVPPQGGRKHPHQEFIQIDTTNILFICGGAFDGIEQIIKRRLGQKVIGFGSDNKHEDLEKEALLSKVLPEDLLRFGLIPEFIGRLPIIASLEPLDEKALVEILTKPKNALVKQYRKMLELDDVELVFEDEALTEIAKKAIERKTGARGLRSIIEGIMLDVMFDLPSREDIEKCVITGKTVTDGEPPRLIMKDGTVVNKDKKTSA</sequence>
<reference key="1">
    <citation type="journal article" date="2004" name="J. Mol. Microbiol. Biotechnol.">
        <title>The complete genome sequence of Bacillus licheniformis DSM13, an organism with great industrial potential.</title>
        <authorList>
            <person name="Veith B."/>
            <person name="Herzberg C."/>
            <person name="Steckel S."/>
            <person name="Feesche J."/>
            <person name="Maurer K.H."/>
            <person name="Ehrenreich P."/>
            <person name="Baeumer S."/>
            <person name="Henne A."/>
            <person name="Liesegang H."/>
            <person name="Merkl R."/>
            <person name="Ehrenreich A."/>
            <person name="Gottschalk G."/>
        </authorList>
    </citation>
    <scope>NUCLEOTIDE SEQUENCE [LARGE SCALE GENOMIC DNA]</scope>
    <source>
        <strain>ATCC 14580 / DSM 13 / JCM 2505 / CCUG 7422 / NBRC 12200 / NCIMB 9375 / NCTC 10341 / NRRL NRS-1264 / Gibson 46</strain>
    </source>
</reference>
<reference key="2">
    <citation type="journal article" date="2004" name="Genome Biol.">
        <title>Complete genome sequence of the industrial bacterium Bacillus licheniformis and comparisons with closely related Bacillus species.</title>
        <authorList>
            <person name="Rey M.W."/>
            <person name="Ramaiya P."/>
            <person name="Nelson B.A."/>
            <person name="Brody-Karpin S.D."/>
            <person name="Zaretsky E.J."/>
            <person name="Tang M."/>
            <person name="Lopez de Leon A."/>
            <person name="Xiang H."/>
            <person name="Gusti V."/>
            <person name="Clausen I.G."/>
            <person name="Olsen P.B."/>
            <person name="Rasmussen M.D."/>
            <person name="Andersen J.T."/>
            <person name="Joergensen P.L."/>
            <person name="Larsen T.S."/>
            <person name="Sorokin A."/>
            <person name="Bolotin A."/>
            <person name="Lapidus A."/>
            <person name="Galleron N."/>
            <person name="Ehrlich S.D."/>
            <person name="Berka R.M."/>
        </authorList>
    </citation>
    <scope>NUCLEOTIDE SEQUENCE [LARGE SCALE GENOMIC DNA]</scope>
    <source>
        <strain>ATCC 14580 / DSM 13 / JCM 2505 / CCUG 7422 / NBRC 12200 / NCIMB 9375 / NCTC 10341 / NRRL NRS-1264 / Gibson 46</strain>
    </source>
</reference>
<proteinExistence type="inferred from homology"/>
<organism>
    <name type="scientific">Bacillus licheniformis (strain ATCC 14580 / DSM 13 / JCM 2505 / CCUG 7422 / NBRC 12200 / NCIMB 9375 / NCTC 10341 / NRRL NRS-1264 / Gibson 46)</name>
    <dbReference type="NCBI Taxonomy" id="279010"/>
    <lineage>
        <taxon>Bacteria</taxon>
        <taxon>Bacillati</taxon>
        <taxon>Bacillota</taxon>
        <taxon>Bacilli</taxon>
        <taxon>Bacillales</taxon>
        <taxon>Bacillaceae</taxon>
        <taxon>Bacillus</taxon>
    </lineage>
</organism>
<accession>Q65GJ4</accession>
<accession>Q62S02</accession>
<dbReference type="EMBL" id="CP000002">
    <property type="protein sequence ID" value="AAU24458.1"/>
    <property type="molecule type" value="Genomic_DNA"/>
</dbReference>
<dbReference type="EMBL" id="AE017333">
    <property type="protein sequence ID" value="AAU41820.1"/>
    <property type="molecule type" value="Genomic_DNA"/>
</dbReference>
<dbReference type="RefSeq" id="WP_003184083.1">
    <property type="nucleotide sequence ID" value="NC_006322.1"/>
</dbReference>
<dbReference type="SMR" id="Q65GJ4"/>
<dbReference type="STRING" id="279010.BL00619"/>
<dbReference type="GeneID" id="92860454"/>
<dbReference type="KEGG" id="bld:BLi02952"/>
<dbReference type="KEGG" id="bli:BL00619"/>
<dbReference type="eggNOG" id="COG1219">
    <property type="taxonomic scope" value="Bacteria"/>
</dbReference>
<dbReference type="HOGENOM" id="CLU_014218_8_2_9"/>
<dbReference type="Proteomes" id="UP000000606">
    <property type="component" value="Chromosome"/>
</dbReference>
<dbReference type="GO" id="GO:0009376">
    <property type="term" value="C:HslUV protease complex"/>
    <property type="evidence" value="ECO:0007669"/>
    <property type="project" value="TreeGrafter"/>
</dbReference>
<dbReference type="GO" id="GO:0005524">
    <property type="term" value="F:ATP binding"/>
    <property type="evidence" value="ECO:0007669"/>
    <property type="project" value="UniProtKB-UniRule"/>
</dbReference>
<dbReference type="GO" id="GO:0016887">
    <property type="term" value="F:ATP hydrolysis activity"/>
    <property type="evidence" value="ECO:0007669"/>
    <property type="project" value="InterPro"/>
</dbReference>
<dbReference type="GO" id="GO:0140662">
    <property type="term" value="F:ATP-dependent protein folding chaperone"/>
    <property type="evidence" value="ECO:0007669"/>
    <property type="project" value="InterPro"/>
</dbReference>
<dbReference type="GO" id="GO:0046983">
    <property type="term" value="F:protein dimerization activity"/>
    <property type="evidence" value="ECO:0007669"/>
    <property type="project" value="InterPro"/>
</dbReference>
<dbReference type="GO" id="GO:0051082">
    <property type="term" value="F:unfolded protein binding"/>
    <property type="evidence" value="ECO:0007669"/>
    <property type="project" value="UniProtKB-UniRule"/>
</dbReference>
<dbReference type="GO" id="GO:0008270">
    <property type="term" value="F:zinc ion binding"/>
    <property type="evidence" value="ECO:0007669"/>
    <property type="project" value="InterPro"/>
</dbReference>
<dbReference type="GO" id="GO:0051301">
    <property type="term" value="P:cell division"/>
    <property type="evidence" value="ECO:0007669"/>
    <property type="project" value="TreeGrafter"/>
</dbReference>
<dbReference type="GO" id="GO:0051603">
    <property type="term" value="P:proteolysis involved in protein catabolic process"/>
    <property type="evidence" value="ECO:0007669"/>
    <property type="project" value="TreeGrafter"/>
</dbReference>
<dbReference type="CDD" id="cd19497">
    <property type="entry name" value="RecA-like_ClpX"/>
    <property type="match status" value="1"/>
</dbReference>
<dbReference type="FunFam" id="1.10.8.60:FF:000002">
    <property type="entry name" value="ATP-dependent Clp protease ATP-binding subunit ClpX"/>
    <property type="match status" value="1"/>
</dbReference>
<dbReference type="FunFam" id="3.40.50.300:FF:000005">
    <property type="entry name" value="ATP-dependent Clp protease ATP-binding subunit ClpX"/>
    <property type="match status" value="1"/>
</dbReference>
<dbReference type="Gene3D" id="1.10.8.60">
    <property type="match status" value="1"/>
</dbReference>
<dbReference type="Gene3D" id="6.20.220.10">
    <property type="entry name" value="ClpX chaperone, C4-type zinc finger domain"/>
    <property type="match status" value="1"/>
</dbReference>
<dbReference type="Gene3D" id="3.40.50.300">
    <property type="entry name" value="P-loop containing nucleotide triphosphate hydrolases"/>
    <property type="match status" value="1"/>
</dbReference>
<dbReference type="HAMAP" id="MF_00175">
    <property type="entry name" value="ClpX"/>
    <property type="match status" value="1"/>
</dbReference>
<dbReference type="InterPro" id="IPR003593">
    <property type="entry name" value="AAA+_ATPase"/>
</dbReference>
<dbReference type="InterPro" id="IPR050052">
    <property type="entry name" value="ATP-dep_Clp_protease_ClpX"/>
</dbReference>
<dbReference type="InterPro" id="IPR003959">
    <property type="entry name" value="ATPase_AAA_core"/>
</dbReference>
<dbReference type="InterPro" id="IPR019489">
    <property type="entry name" value="Clp_ATPase_C"/>
</dbReference>
<dbReference type="InterPro" id="IPR004487">
    <property type="entry name" value="Clp_protease_ATP-bd_su_ClpX"/>
</dbReference>
<dbReference type="InterPro" id="IPR046425">
    <property type="entry name" value="ClpX_bact"/>
</dbReference>
<dbReference type="InterPro" id="IPR027417">
    <property type="entry name" value="P-loop_NTPase"/>
</dbReference>
<dbReference type="InterPro" id="IPR010603">
    <property type="entry name" value="Znf_CppX_C4"/>
</dbReference>
<dbReference type="InterPro" id="IPR038366">
    <property type="entry name" value="Znf_CppX_C4_sf"/>
</dbReference>
<dbReference type="NCBIfam" id="TIGR00382">
    <property type="entry name" value="clpX"/>
    <property type="match status" value="1"/>
</dbReference>
<dbReference type="NCBIfam" id="NF003745">
    <property type="entry name" value="PRK05342.1"/>
    <property type="match status" value="1"/>
</dbReference>
<dbReference type="PANTHER" id="PTHR48102:SF7">
    <property type="entry name" value="ATP-DEPENDENT CLP PROTEASE ATP-BINDING SUBUNIT CLPX-LIKE, MITOCHONDRIAL"/>
    <property type="match status" value="1"/>
</dbReference>
<dbReference type="PANTHER" id="PTHR48102">
    <property type="entry name" value="ATP-DEPENDENT CLP PROTEASE ATP-BINDING SUBUNIT CLPX-LIKE, MITOCHONDRIAL-RELATED"/>
    <property type="match status" value="1"/>
</dbReference>
<dbReference type="Pfam" id="PF07724">
    <property type="entry name" value="AAA_2"/>
    <property type="match status" value="1"/>
</dbReference>
<dbReference type="Pfam" id="PF10431">
    <property type="entry name" value="ClpB_D2-small"/>
    <property type="match status" value="1"/>
</dbReference>
<dbReference type="Pfam" id="PF06689">
    <property type="entry name" value="zf-C4_ClpX"/>
    <property type="match status" value="1"/>
</dbReference>
<dbReference type="SMART" id="SM00382">
    <property type="entry name" value="AAA"/>
    <property type="match status" value="1"/>
</dbReference>
<dbReference type="SMART" id="SM01086">
    <property type="entry name" value="ClpB_D2-small"/>
    <property type="match status" value="1"/>
</dbReference>
<dbReference type="SMART" id="SM00994">
    <property type="entry name" value="zf-C4_ClpX"/>
    <property type="match status" value="1"/>
</dbReference>
<dbReference type="SUPFAM" id="SSF57716">
    <property type="entry name" value="Glucocorticoid receptor-like (DNA-binding domain)"/>
    <property type="match status" value="1"/>
</dbReference>
<dbReference type="SUPFAM" id="SSF52540">
    <property type="entry name" value="P-loop containing nucleoside triphosphate hydrolases"/>
    <property type="match status" value="1"/>
</dbReference>
<dbReference type="PROSITE" id="PS51902">
    <property type="entry name" value="CLPX_ZB"/>
    <property type="match status" value="1"/>
</dbReference>
<gene>
    <name evidence="1" type="primary">clpX</name>
    <name type="ordered locus">BLi02952</name>
    <name type="ordered locus">BL00619</name>
</gene>
<evidence type="ECO:0000255" key="1">
    <source>
        <dbReference type="HAMAP-Rule" id="MF_00175"/>
    </source>
</evidence>
<evidence type="ECO:0000255" key="2">
    <source>
        <dbReference type="PROSITE-ProRule" id="PRU01250"/>
    </source>
</evidence>
<protein>
    <recommendedName>
        <fullName evidence="1">ATP-dependent Clp protease ATP-binding subunit ClpX</fullName>
    </recommendedName>
</protein>
<name>CLPX_BACLD</name>
<feature type="chain" id="PRO_1000024517" description="ATP-dependent Clp protease ATP-binding subunit ClpX">
    <location>
        <begin position="1"/>
        <end position="421"/>
    </location>
</feature>
<feature type="domain" description="ClpX-type ZB" evidence="2">
    <location>
        <begin position="1"/>
        <end position="54"/>
    </location>
</feature>
<feature type="binding site" evidence="2">
    <location>
        <position position="13"/>
    </location>
    <ligand>
        <name>Zn(2+)</name>
        <dbReference type="ChEBI" id="CHEBI:29105"/>
    </ligand>
</feature>
<feature type="binding site" evidence="2">
    <location>
        <position position="16"/>
    </location>
    <ligand>
        <name>Zn(2+)</name>
        <dbReference type="ChEBI" id="CHEBI:29105"/>
    </ligand>
</feature>
<feature type="binding site" evidence="2">
    <location>
        <position position="35"/>
    </location>
    <ligand>
        <name>Zn(2+)</name>
        <dbReference type="ChEBI" id="CHEBI:29105"/>
    </ligand>
</feature>
<feature type="binding site" evidence="2">
    <location>
        <position position="38"/>
    </location>
    <ligand>
        <name>Zn(2+)</name>
        <dbReference type="ChEBI" id="CHEBI:29105"/>
    </ligand>
</feature>
<feature type="binding site" evidence="1">
    <location>
        <begin position="117"/>
        <end position="124"/>
    </location>
    <ligand>
        <name>ATP</name>
        <dbReference type="ChEBI" id="CHEBI:30616"/>
    </ligand>
</feature>